<sequence>MQRTVNIQAVESKLKFTFSQPRLLVTALTHPSYRNEFPSDGEDSERLEFLGDAVLGLVVTEHLFLLFPSLNEGLLSTTRSALVNAEACFNYTQKLSLGEHLLIGRGEKMQSHRGKISAYANLFEAILGAVYLDGGLAPARQIIVPLLPNKEAILPLMLVNPKNRLQQFTQQTLKVLPTYIALPWSSEDGTPGYHVQVFVNEKLWGEGFAGSKKEAEKLAAKQALSTHDDNKN</sequence>
<proteinExistence type="inferred from homology"/>
<name>RNC_CHLMU</name>
<reference key="1">
    <citation type="journal article" date="2000" name="Nucleic Acids Res.">
        <title>Genome sequences of Chlamydia trachomatis MoPn and Chlamydia pneumoniae AR39.</title>
        <authorList>
            <person name="Read T.D."/>
            <person name="Brunham R.C."/>
            <person name="Shen C."/>
            <person name="Gill S.R."/>
            <person name="Heidelberg J.F."/>
            <person name="White O."/>
            <person name="Hickey E.K."/>
            <person name="Peterson J.D."/>
            <person name="Utterback T.R."/>
            <person name="Berry K.J."/>
            <person name="Bass S."/>
            <person name="Linher K.D."/>
            <person name="Weidman J.F."/>
            <person name="Khouri H.M."/>
            <person name="Craven B."/>
            <person name="Bowman C."/>
            <person name="Dodson R.J."/>
            <person name="Gwinn M.L."/>
            <person name="Nelson W.C."/>
            <person name="DeBoy R.T."/>
            <person name="Kolonay J.F."/>
            <person name="McClarty G."/>
            <person name="Salzberg S.L."/>
            <person name="Eisen J.A."/>
            <person name="Fraser C.M."/>
        </authorList>
    </citation>
    <scope>NUCLEOTIDE SEQUENCE [LARGE SCALE GENOMIC DNA]</scope>
    <source>
        <strain>MoPn / Nigg</strain>
    </source>
</reference>
<protein>
    <recommendedName>
        <fullName evidence="1">Ribonuclease 3</fullName>
        <ecNumber evidence="1">3.1.26.3</ecNumber>
    </recommendedName>
    <alternativeName>
        <fullName evidence="1">Ribonuclease III</fullName>
        <shortName evidence="1">RNase III</shortName>
    </alternativeName>
</protein>
<gene>
    <name evidence="1" type="primary">rnc</name>
    <name type="ordered locus">TC_0570</name>
</gene>
<organism>
    <name type="scientific">Chlamydia muridarum (strain MoPn / Nigg)</name>
    <dbReference type="NCBI Taxonomy" id="243161"/>
    <lineage>
        <taxon>Bacteria</taxon>
        <taxon>Pseudomonadati</taxon>
        <taxon>Chlamydiota</taxon>
        <taxon>Chlamydiia</taxon>
        <taxon>Chlamydiales</taxon>
        <taxon>Chlamydiaceae</taxon>
        <taxon>Chlamydia/Chlamydophila group</taxon>
        <taxon>Chlamydia</taxon>
    </lineage>
</organism>
<feature type="chain" id="PRO_0000180386" description="Ribonuclease 3">
    <location>
        <begin position="1"/>
        <end position="232"/>
    </location>
</feature>
<feature type="domain" description="RNase III" evidence="1">
    <location>
        <begin position="7"/>
        <end position="135"/>
    </location>
</feature>
<feature type="domain" description="DRBM" evidence="1">
    <location>
        <begin position="160"/>
        <end position="229"/>
    </location>
</feature>
<feature type="active site" evidence="1">
    <location>
        <position position="52"/>
    </location>
</feature>
<feature type="active site" evidence="1">
    <location>
        <position position="124"/>
    </location>
</feature>
<feature type="binding site" evidence="1">
    <location>
        <position position="48"/>
    </location>
    <ligand>
        <name>Mg(2+)</name>
        <dbReference type="ChEBI" id="CHEBI:18420"/>
    </ligand>
</feature>
<feature type="binding site" evidence="1">
    <location>
        <position position="121"/>
    </location>
    <ligand>
        <name>Mg(2+)</name>
        <dbReference type="ChEBI" id="CHEBI:18420"/>
    </ligand>
</feature>
<feature type="binding site" evidence="1">
    <location>
        <position position="124"/>
    </location>
    <ligand>
        <name>Mg(2+)</name>
        <dbReference type="ChEBI" id="CHEBI:18420"/>
    </ligand>
</feature>
<comment type="function">
    <text evidence="1">Digests double-stranded RNA. Involved in the processing of primary rRNA transcript to yield the immediate precursors to the large and small rRNAs (23S and 16S). Processes some mRNAs, and tRNAs when they are encoded in the rRNA operon. Processes pre-crRNA and tracrRNA of type II CRISPR loci if present in the organism.</text>
</comment>
<comment type="catalytic activity">
    <reaction evidence="1">
        <text>Endonucleolytic cleavage to 5'-phosphomonoester.</text>
        <dbReference type="EC" id="3.1.26.3"/>
    </reaction>
</comment>
<comment type="cofactor">
    <cofactor evidence="1">
        <name>Mg(2+)</name>
        <dbReference type="ChEBI" id="CHEBI:18420"/>
    </cofactor>
</comment>
<comment type="subunit">
    <text evidence="1">Homodimer.</text>
</comment>
<comment type="subcellular location">
    <subcellularLocation>
        <location evidence="1">Cytoplasm</location>
    </subcellularLocation>
</comment>
<comment type="similarity">
    <text evidence="1">Belongs to the ribonuclease III family.</text>
</comment>
<keyword id="KW-0963">Cytoplasm</keyword>
<keyword id="KW-0255">Endonuclease</keyword>
<keyword id="KW-0378">Hydrolase</keyword>
<keyword id="KW-0460">Magnesium</keyword>
<keyword id="KW-0479">Metal-binding</keyword>
<keyword id="KW-0507">mRNA processing</keyword>
<keyword id="KW-0540">Nuclease</keyword>
<keyword id="KW-0694">RNA-binding</keyword>
<keyword id="KW-0698">rRNA processing</keyword>
<keyword id="KW-0699">rRNA-binding</keyword>
<keyword id="KW-0819">tRNA processing</keyword>
<accession>Q9PK97</accession>
<dbReference type="EC" id="3.1.26.3" evidence="1"/>
<dbReference type="EMBL" id="AE002160">
    <property type="protein sequence ID" value="AAF39406.1"/>
    <property type="molecule type" value="Genomic_DNA"/>
</dbReference>
<dbReference type="PIR" id="C81688">
    <property type="entry name" value="C81688"/>
</dbReference>
<dbReference type="RefSeq" id="WP_010230864.1">
    <property type="nucleotide sequence ID" value="NZ_CP063055.1"/>
</dbReference>
<dbReference type="SMR" id="Q9PK97"/>
<dbReference type="GeneID" id="1245929"/>
<dbReference type="KEGG" id="cmu:TC_0570"/>
<dbReference type="eggNOG" id="COG0571">
    <property type="taxonomic scope" value="Bacteria"/>
</dbReference>
<dbReference type="HOGENOM" id="CLU_000907_1_3_0"/>
<dbReference type="OrthoDB" id="9805026at2"/>
<dbReference type="Proteomes" id="UP000000800">
    <property type="component" value="Chromosome"/>
</dbReference>
<dbReference type="GO" id="GO:0005737">
    <property type="term" value="C:cytoplasm"/>
    <property type="evidence" value="ECO:0007669"/>
    <property type="project" value="UniProtKB-SubCell"/>
</dbReference>
<dbReference type="GO" id="GO:0003725">
    <property type="term" value="F:double-stranded RNA binding"/>
    <property type="evidence" value="ECO:0007669"/>
    <property type="project" value="TreeGrafter"/>
</dbReference>
<dbReference type="GO" id="GO:0046872">
    <property type="term" value="F:metal ion binding"/>
    <property type="evidence" value="ECO:0007669"/>
    <property type="project" value="UniProtKB-KW"/>
</dbReference>
<dbReference type="GO" id="GO:0004525">
    <property type="term" value="F:ribonuclease III activity"/>
    <property type="evidence" value="ECO:0007669"/>
    <property type="project" value="UniProtKB-UniRule"/>
</dbReference>
<dbReference type="GO" id="GO:0019843">
    <property type="term" value="F:rRNA binding"/>
    <property type="evidence" value="ECO:0007669"/>
    <property type="project" value="UniProtKB-KW"/>
</dbReference>
<dbReference type="GO" id="GO:0006397">
    <property type="term" value="P:mRNA processing"/>
    <property type="evidence" value="ECO:0007669"/>
    <property type="project" value="UniProtKB-UniRule"/>
</dbReference>
<dbReference type="GO" id="GO:0010468">
    <property type="term" value="P:regulation of gene expression"/>
    <property type="evidence" value="ECO:0007669"/>
    <property type="project" value="TreeGrafter"/>
</dbReference>
<dbReference type="GO" id="GO:0006364">
    <property type="term" value="P:rRNA processing"/>
    <property type="evidence" value="ECO:0007669"/>
    <property type="project" value="UniProtKB-UniRule"/>
</dbReference>
<dbReference type="GO" id="GO:0008033">
    <property type="term" value="P:tRNA processing"/>
    <property type="evidence" value="ECO:0007669"/>
    <property type="project" value="UniProtKB-KW"/>
</dbReference>
<dbReference type="CDD" id="cd10845">
    <property type="entry name" value="DSRM_RNAse_III_family"/>
    <property type="match status" value="1"/>
</dbReference>
<dbReference type="CDD" id="cd00593">
    <property type="entry name" value="RIBOc"/>
    <property type="match status" value="1"/>
</dbReference>
<dbReference type="FunFam" id="1.10.1520.10:FF:000001">
    <property type="entry name" value="Ribonuclease 3"/>
    <property type="match status" value="1"/>
</dbReference>
<dbReference type="FunFam" id="3.30.160.20:FF:000083">
    <property type="entry name" value="Ribonuclease 3"/>
    <property type="match status" value="1"/>
</dbReference>
<dbReference type="Gene3D" id="3.30.160.20">
    <property type="match status" value="1"/>
</dbReference>
<dbReference type="Gene3D" id="1.10.1520.10">
    <property type="entry name" value="Ribonuclease III domain"/>
    <property type="match status" value="1"/>
</dbReference>
<dbReference type="HAMAP" id="MF_00104">
    <property type="entry name" value="RNase_III"/>
    <property type="match status" value="1"/>
</dbReference>
<dbReference type="InterPro" id="IPR014720">
    <property type="entry name" value="dsRBD_dom"/>
</dbReference>
<dbReference type="InterPro" id="IPR011907">
    <property type="entry name" value="RNase_III"/>
</dbReference>
<dbReference type="InterPro" id="IPR000999">
    <property type="entry name" value="RNase_III_dom"/>
</dbReference>
<dbReference type="InterPro" id="IPR036389">
    <property type="entry name" value="RNase_III_sf"/>
</dbReference>
<dbReference type="NCBIfam" id="TIGR02191">
    <property type="entry name" value="RNaseIII"/>
    <property type="match status" value="1"/>
</dbReference>
<dbReference type="PANTHER" id="PTHR11207:SF0">
    <property type="entry name" value="RIBONUCLEASE 3"/>
    <property type="match status" value="1"/>
</dbReference>
<dbReference type="PANTHER" id="PTHR11207">
    <property type="entry name" value="RIBONUCLEASE III"/>
    <property type="match status" value="1"/>
</dbReference>
<dbReference type="Pfam" id="PF00035">
    <property type="entry name" value="dsrm"/>
    <property type="match status" value="1"/>
</dbReference>
<dbReference type="Pfam" id="PF14622">
    <property type="entry name" value="Ribonucleas_3_3"/>
    <property type="match status" value="1"/>
</dbReference>
<dbReference type="SMART" id="SM00358">
    <property type="entry name" value="DSRM"/>
    <property type="match status" value="1"/>
</dbReference>
<dbReference type="SMART" id="SM00535">
    <property type="entry name" value="RIBOc"/>
    <property type="match status" value="1"/>
</dbReference>
<dbReference type="SUPFAM" id="SSF54768">
    <property type="entry name" value="dsRNA-binding domain-like"/>
    <property type="match status" value="1"/>
</dbReference>
<dbReference type="SUPFAM" id="SSF69065">
    <property type="entry name" value="RNase III domain-like"/>
    <property type="match status" value="1"/>
</dbReference>
<dbReference type="PROSITE" id="PS50137">
    <property type="entry name" value="DS_RBD"/>
    <property type="match status" value="1"/>
</dbReference>
<dbReference type="PROSITE" id="PS00517">
    <property type="entry name" value="RNASE_3_1"/>
    <property type="match status" value="1"/>
</dbReference>
<dbReference type="PROSITE" id="PS50142">
    <property type="entry name" value="RNASE_3_2"/>
    <property type="match status" value="1"/>
</dbReference>
<evidence type="ECO:0000255" key="1">
    <source>
        <dbReference type="HAMAP-Rule" id="MF_00104"/>
    </source>
</evidence>